<feature type="chain" id="PRO_0000116485" description="Spindle pole body protein ppc89">
    <location>
        <begin position="1"/>
        <end position="783"/>
    </location>
</feature>
<feature type="region of interest" description="Disordered" evidence="1">
    <location>
        <begin position="180"/>
        <end position="216"/>
    </location>
</feature>
<feature type="region of interest" description="Disordered" evidence="1">
    <location>
        <begin position="434"/>
        <end position="458"/>
    </location>
</feature>
<feature type="region of interest" description="Disordered" evidence="1">
    <location>
        <begin position="471"/>
        <end position="504"/>
    </location>
</feature>
<feature type="region of interest" description="Disordered" evidence="1">
    <location>
        <begin position="528"/>
        <end position="610"/>
    </location>
</feature>
<feature type="compositionally biased region" description="Polar residues" evidence="1">
    <location>
        <begin position="201"/>
        <end position="216"/>
    </location>
</feature>
<feature type="compositionally biased region" description="Polar residues" evidence="1">
    <location>
        <begin position="437"/>
        <end position="453"/>
    </location>
</feature>
<feature type="compositionally biased region" description="Polar residues" evidence="1">
    <location>
        <begin position="474"/>
        <end position="504"/>
    </location>
</feature>
<feature type="compositionally biased region" description="Basic residues" evidence="1">
    <location>
        <begin position="536"/>
        <end position="551"/>
    </location>
</feature>
<feature type="compositionally biased region" description="Acidic residues" evidence="1">
    <location>
        <begin position="566"/>
        <end position="590"/>
    </location>
</feature>
<feature type="modified residue" description="Phosphoserine" evidence="4">
    <location>
        <position position="157"/>
    </location>
</feature>
<name>PPC89_SCHPO</name>
<proteinExistence type="evidence at protein level"/>
<sequence>MPSQFNDNFVATDDDVGTMARVGMALDRELNGDSFQDNLNFQPRSGKREDFEPFFQDTPNTKSLSKHFHDFTMNASLETLPSVEKPRGRNMNAFEETSWNRFRKNGSLFPLSSPPISEPDLRPQALNETPDYRNRFLGAFKKQGVLDDHGNLKLDASPSFLKKPAEYTPLANRQNQNLAFDSPTEALPPKPTTPWRRNGFRSKTTPNLNSGKETPSSYKASARLMEQLGLNHSEPSVDFNNQTSYRLPNLTNLSSLIRDDTIDENGNAKEHDRLPELNTIPVASTDEQLFNAHQLLEKKFEILKRERNECNAKIDELQDKLELLTDAYNREKRRARSLEERMSKEMLTKLGESNVDDGMAASRYDTVKREKERLSEHLKSLQEQYEHIQSVYKNVLLDRESYIMRLGNKISENNELLNENRVLKEKLQTYLDKKESNVTSKIKSTAENSSKPLSMNEADERKDGLNNLLFENKSGANTKEMSNGTETAKENCSPQQDSTSPTSGYQDLVKELAKEIEMRKSLELKLKLSQSNKAGPVKHRKRRPKSKRRITGKVVFDSPNVASGVESDEGSEEISLDSEYSDILSDDGDFEKEKQATLPRRRSSSSMKGNKLAEDSYLNEAGFDWNQGTFHNGSEFGTTGVPDEPNEEELPKHVLKQVEHIINESAAHGVGKCNACHARQEDLIRGEQKVSHSNCLYADQTLRPSQPPSEALKTVVNQLTNELMELKKRYEKLSDRYNSLTPGYHKHKRQEIKNKLIKLIECMESKSDQIYLLYDVNVGKDFS</sequence>
<comment type="function">
    <text evidence="2">Has a role in meiosis.</text>
</comment>
<comment type="subcellular location">
    <subcellularLocation>
        <location evidence="3">Cytoplasm</location>
    </subcellularLocation>
    <subcellularLocation>
        <location evidence="3">Cytoplasm</location>
        <location evidence="3">Cytoskeleton</location>
        <location evidence="3">Microtubule organizing center</location>
        <location evidence="3">Spindle pole body</location>
    </subcellularLocation>
</comment>
<keyword id="KW-0963">Cytoplasm</keyword>
<keyword id="KW-0206">Cytoskeleton</keyword>
<keyword id="KW-0469">Meiosis</keyword>
<keyword id="KW-0597">Phosphoprotein</keyword>
<keyword id="KW-1185">Reference proteome</keyword>
<reference key="1">
    <citation type="journal article" date="2002" name="Nature">
        <title>The genome sequence of Schizosaccharomyces pombe.</title>
        <authorList>
            <person name="Wood V."/>
            <person name="Gwilliam R."/>
            <person name="Rajandream M.A."/>
            <person name="Lyne M.H."/>
            <person name="Lyne R."/>
            <person name="Stewart A."/>
            <person name="Sgouros J.G."/>
            <person name="Peat N."/>
            <person name="Hayles J."/>
            <person name="Baker S.G."/>
            <person name="Basham D."/>
            <person name="Bowman S."/>
            <person name="Brooks K."/>
            <person name="Brown D."/>
            <person name="Brown S."/>
            <person name="Chillingworth T."/>
            <person name="Churcher C.M."/>
            <person name="Collins M."/>
            <person name="Connor R."/>
            <person name="Cronin A."/>
            <person name="Davis P."/>
            <person name="Feltwell T."/>
            <person name="Fraser A."/>
            <person name="Gentles S."/>
            <person name="Goble A."/>
            <person name="Hamlin N."/>
            <person name="Harris D.E."/>
            <person name="Hidalgo J."/>
            <person name="Hodgson G."/>
            <person name="Holroyd S."/>
            <person name="Hornsby T."/>
            <person name="Howarth S."/>
            <person name="Huckle E.J."/>
            <person name="Hunt S."/>
            <person name="Jagels K."/>
            <person name="James K.D."/>
            <person name="Jones L."/>
            <person name="Jones M."/>
            <person name="Leather S."/>
            <person name="McDonald S."/>
            <person name="McLean J."/>
            <person name="Mooney P."/>
            <person name="Moule S."/>
            <person name="Mungall K.L."/>
            <person name="Murphy L.D."/>
            <person name="Niblett D."/>
            <person name="Odell C."/>
            <person name="Oliver K."/>
            <person name="O'Neil S."/>
            <person name="Pearson D."/>
            <person name="Quail M.A."/>
            <person name="Rabbinowitsch E."/>
            <person name="Rutherford K.M."/>
            <person name="Rutter S."/>
            <person name="Saunders D."/>
            <person name="Seeger K."/>
            <person name="Sharp S."/>
            <person name="Skelton J."/>
            <person name="Simmonds M.N."/>
            <person name="Squares R."/>
            <person name="Squares S."/>
            <person name="Stevens K."/>
            <person name="Taylor K."/>
            <person name="Taylor R.G."/>
            <person name="Tivey A."/>
            <person name="Walsh S.V."/>
            <person name="Warren T."/>
            <person name="Whitehead S."/>
            <person name="Woodward J.R."/>
            <person name="Volckaert G."/>
            <person name="Aert R."/>
            <person name="Robben J."/>
            <person name="Grymonprez B."/>
            <person name="Weltjens I."/>
            <person name="Vanstreels E."/>
            <person name="Rieger M."/>
            <person name="Schaefer M."/>
            <person name="Mueller-Auer S."/>
            <person name="Gabel C."/>
            <person name="Fuchs M."/>
            <person name="Duesterhoeft A."/>
            <person name="Fritzc C."/>
            <person name="Holzer E."/>
            <person name="Moestl D."/>
            <person name="Hilbert H."/>
            <person name="Borzym K."/>
            <person name="Langer I."/>
            <person name="Beck A."/>
            <person name="Lehrach H."/>
            <person name="Reinhardt R."/>
            <person name="Pohl T.M."/>
            <person name="Eger P."/>
            <person name="Zimmermann W."/>
            <person name="Wedler H."/>
            <person name="Wambutt R."/>
            <person name="Purnelle B."/>
            <person name="Goffeau A."/>
            <person name="Cadieu E."/>
            <person name="Dreano S."/>
            <person name="Gloux S."/>
            <person name="Lelaure V."/>
            <person name="Mottier S."/>
            <person name="Galibert F."/>
            <person name="Aves S.J."/>
            <person name="Xiang Z."/>
            <person name="Hunt C."/>
            <person name="Moore K."/>
            <person name="Hurst S.M."/>
            <person name="Lucas M."/>
            <person name="Rochet M."/>
            <person name="Gaillardin C."/>
            <person name="Tallada V.A."/>
            <person name="Garzon A."/>
            <person name="Thode G."/>
            <person name="Daga R.R."/>
            <person name="Cruzado L."/>
            <person name="Jimenez J."/>
            <person name="Sanchez M."/>
            <person name="del Rey F."/>
            <person name="Benito J."/>
            <person name="Dominguez A."/>
            <person name="Revuelta J.L."/>
            <person name="Moreno S."/>
            <person name="Armstrong J."/>
            <person name="Forsburg S.L."/>
            <person name="Cerutti L."/>
            <person name="Lowe T."/>
            <person name="McCombie W.R."/>
            <person name="Paulsen I."/>
            <person name="Potashkin J."/>
            <person name="Shpakovski G.V."/>
            <person name="Ussery D."/>
            <person name="Barrell B.G."/>
            <person name="Nurse P."/>
        </authorList>
    </citation>
    <scope>NUCLEOTIDE SEQUENCE [LARGE SCALE GENOMIC DNA]</scope>
    <source>
        <strain>972 / ATCC 24843</strain>
    </source>
</reference>
<reference key="2">
    <citation type="journal article" date="2005" name="Curr. Biol.">
        <title>A large-scale screen in S. pombe identifies seven novel genes required for critical meiotic events.</title>
        <authorList>
            <person name="Martin-Castellanos C."/>
            <person name="Blanco M."/>
            <person name="Rozalen A.E."/>
            <person name="Perez-Hidalgo L."/>
            <person name="Garcia A.I."/>
            <person name="Conde F."/>
            <person name="Mata J."/>
            <person name="Ellermeier C."/>
            <person name="Davis L."/>
            <person name="San-Segundo P."/>
            <person name="Smith G.R."/>
            <person name="Moreno S."/>
        </authorList>
    </citation>
    <scope>FUNCTION IN MEIOSIS</scope>
</reference>
<reference key="3">
    <citation type="journal article" date="2006" name="Nat. Biotechnol.">
        <title>ORFeome cloning and global analysis of protein localization in the fission yeast Schizosaccharomyces pombe.</title>
        <authorList>
            <person name="Matsuyama A."/>
            <person name="Arai R."/>
            <person name="Yashiroda Y."/>
            <person name="Shirai A."/>
            <person name="Kamata A."/>
            <person name="Sekido S."/>
            <person name="Kobayashi Y."/>
            <person name="Hashimoto A."/>
            <person name="Hamamoto M."/>
            <person name="Hiraoka Y."/>
            <person name="Horinouchi S."/>
            <person name="Yoshida M."/>
        </authorList>
    </citation>
    <scope>SUBCELLULAR LOCATION [LARGE SCALE ANALYSIS]</scope>
</reference>
<reference key="4">
    <citation type="journal article" date="2008" name="J. Proteome Res.">
        <title>Phosphoproteome analysis of fission yeast.</title>
        <authorList>
            <person name="Wilson-Grady J.T."/>
            <person name="Villen J."/>
            <person name="Gygi S.P."/>
        </authorList>
    </citation>
    <scope>PHOSPHORYLATION [LARGE SCALE ANALYSIS] AT SER-157</scope>
    <scope>IDENTIFICATION BY MASS SPECTROMETRY</scope>
</reference>
<dbReference type="EMBL" id="CU329670">
    <property type="protein sequence ID" value="CAA93350.1"/>
    <property type="molecule type" value="Genomic_DNA"/>
</dbReference>
<dbReference type="PIR" id="T38891">
    <property type="entry name" value="T38891"/>
</dbReference>
<dbReference type="RefSeq" id="NP_594347.1">
    <property type="nucleotide sequence ID" value="NM_001019768.2"/>
</dbReference>
<dbReference type="SMR" id="Q10218"/>
<dbReference type="BioGRID" id="279971">
    <property type="interactions" value="11"/>
</dbReference>
<dbReference type="IntAct" id="Q10218">
    <property type="interactions" value="2"/>
</dbReference>
<dbReference type="STRING" id="284812.Q10218"/>
<dbReference type="iPTMnet" id="Q10218"/>
<dbReference type="PaxDb" id="4896-SPAC4H3.11c.1"/>
<dbReference type="EnsemblFungi" id="SPAC4H3.11c.1">
    <property type="protein sequence ID" value="SPAC4H3.11c.1:pep"/>
    <property type="gene ID" value="SPAC4H3.11c"/>
</dbReference>
<dbReference type="GeneID" id="2543554"/>
<dbReference type="KEGG" id="spo:2543554"/>
<dbReference type="PomBase" id="SPAC4H3.11c">
    <property type="gene designation" value="ppc89"/>
</dbReference>
<dbReference type="VEuPathDB" id="FungiDB:SPAC4H3.11c"/>
<dbReference type="eggNOG" id="ENOG502S7ZB">
    <property type="taxonomic scope" value="Eukaryota"/>
</dbReference>
<dbReference type="HOGENOM" id="CLU_334364_0_0_1"/>
<dbReference type="InParanoid" id="Q10218"/>
<dbReference type="OMA" id="INCNAVH"/>
<dbReference type="CD-CODE" id="576F0A76">
    <property type="entry name" value="Centrosome"/>
</dbReference>
<dbReference type="PRO" id="PR:Q10218"/>
<dbReference type="Proteomes" id="UP000002485">
    <property type="component" value="Chromosome I"/>
</dbReference>
<dbReference type="GO" id="GO:0061493">
    <property type="term" value="C:central plaque of mitotic spindle pole body"/>
    <property type="evidence" value="ECO:0000314"/>
    <property type="project" value="PomBase"/>
</dbReference>
<dbReference type="GO" id="GO:0005737">
    <property type="term" value="C:cytoplasm"/>
    <property type="evidence" value="ECO:0007005"/>
    <property type="project" value="PomBase"/>
</dbReference>
<dbReference type="GO" id="GO:0044732">
    <property type="term" value="C:mitotic spindle pole body"/>
    <property type="evidence" value="ECO:0000314"/>
    <property type="project" value="PomBase"/>
</dbReference>
<dbReference type="GO" id="GO:0008017">
    <property type="term" value="F:microtubule binding"/>
    <property type="evidence" value="ECO:0000318"/>
    <property type="project" value="GO_Central"/>
</dbReference>
<dbReference type="GO" id="GO:0140475">
    <property type="term" value="F:spindle pole body anchor activity"/>
    <property type="evidence" value="ECO:0000269"/>
    <property type="project" value="PomBase"/>
</dbReference>
<dbReference type="GO" id="GO:0051321">
    <property type="term" value="P:meiotic cell cycle"/>
    <property type="evidence" value="ECO:0007669"/>
    <property type="project" value="UniProtKB-KW"/>
</dbReference>
<dbReference type="GO" id="GO:0007052">
    <property type="term" value="P:mitotic spindle organization"/>
    <property type="evidence" value="ECO:0000269"/>
    <property type="project" value="PomBase"/>
</dbReference>
<dbReference type="GO" id="GO:1905047">
    <property type="term" value="P:mitotic spindle pole body organization"/>
    <property type="evidence" value="ECO:0000269"/>
    <property type="project" value="PomBase"/>
</dbReference>
<dbReference type="GO" id="GO:2000432">
    <property type="term" value="P:negative regulation of cytokinesis, actomyosin contractile ring assembly"/>
    <property type="evidence" value="ECO:0000269"/>
    <property type="project" value="PomBase"/>
</dbReference>
<dbReference type="InterPro" id="IPR051756">
    <property type="entry name" value="Centrosomal_MT-associated"/>
</dbReference>
<dbReference type="InterPro" id="IPR024957">
    <property type="entry name" value="Cep57_MT-bd_dom"/>
</dbReference>
<dbReference type="InterPro" id="IPR025925">
    <property type="entry name" value="PPC89_CLD"/>
</dbReference>
<dbReference type="PANTHER" id="PTHR19336:SF9">
    <property type="entry name" value="SPINDLE POLE BODY PROTEIN PPC89"/>
    <property type="match status" value="1"/>
</dbReference>
<dbReference type="PANTHER" id="PTHR19336">
    <property type="entry name" value="UNCHARACTERIZED DUF1167"/>
    <property type="match status" value="1"/>
</dbReference>
<dbReference type="Pfam" id="PF14197">
    <property type="entry name" value="Cep57_CLD_2"/>
    <property type="match status" value="1"/>
</dbReference>
<dbReference type="Pfam" id="PF06657">
    <property type="entry name" value="Cep57_MT_bd"/>
    <property type="match status" value="1"/>
</dbReference>
<evidence type="ECO:0000256" key="1">
    <source>
        <dbReference type="SAM" id="MobiDB-lite"/>
    </source>
</evidence>
<evidence type="ECO:0000269" key="2">
    <source>
    </source>
</evidence>
<evidence type="ECO:0000269" key="3">
    <source>
    </source>
</evidence>
<evidence type="ECO:0000269" key="4">
    <source>
    </source>
</evidence>
<organism>
    <name type="scientific">Schizosaccharomyces pombe (strain 972 / ATCC 24843)</name>
    <name type="common">Fission yeast</name>
    <dbReference type="NCBI Taxonomy" id="284812"/>
    <lineage>
        <taxon>Eukaryota</taxon>
        <taxon>Fungi</taxon>
        <taxon>Dikarya</taxon>
        <taxon>Ascomycota</taxon>
        <taxon>Taphrinomycotina</taxon>
        <taxon>Schizosaccharomycetes</taxon>
        <taxon>Schizosaccharomycetales</taxon>
        <taxon>Schizosaccharomycetaceae</taxon>
        <taxon>Schizosaccharomyces</taxon>
    </lineage>
</organism>
<protein>
    <recommendedName>
        <fullName>Spindle pole body protein ppc89</fullName>
    </recommendedName>
    <alternativeName>
        <fullName>Meiotically up-regulated gene 127 protein</fullName>
    </alternativeName>
</protein>
<gene>
    <name type="primary">ppc89</name>
    <name type="synonym">mug127</name>
    <name type="ORF">SPAC4H3.11c</name>
</gene>
<accession>Q10218</accession>